<dbReference type="EC" id="1.1.1.37" evidence="9"/>
<dbReference type="EMBL" id="AB751611">
    <property type="protein sequence ID" value="BAM48565.1"/>
    <property type="molecule type" value="mRNA"/>
</dbReference>
<dbReference type="EMBL" id="AANG02069421">
    <property type="status" value="NOT_ANNOTATED_CDS"/>
    <property type="molecule type" value="Genomic_DNA"/>
</dbReference>
<dbReference type="EMBL" id="DQ402961">
    <property type="protein sequence ID" value="ABD77294.1"/>
    <property type="molecule type" value="mRNA"/>
</dbReference>
<dbReference type="RefSeq" id="NP_001265782.1">
    <property type="nucleotide sequence ID" value="NM_001278853.1"/>
</dbReference>
<dbReference type="SMR" id="K0J107"/>
<dbReference type="STRING" id="9685.ENSFCAP00000000558"/>
<dbReference type="GlyCosmos" id="K0J107">
    <property type="glycosylation" value="1 site, No reported glycans"/>
</dbReference>
<dbReference type="PaxDb" id="9685-ENSFCAP00000000558"/>
<dbReference type="Ensembl" id="ENSFCAT00000000600.5">
    <property type="protein sequence ID" value="ENSFCAP00000000558.1"/>
    <property type="gene ID" value="ENSFCAG00000000600.5"/>
</dbReference>
<dbReference type="GeneID" id="101084845"/>
<dbReference type="KEGG" id="fca:101084845"/>
<dbReference type="CTD" id="4191"/>
<dbReference type="VGNC" id="VGNC:68221">
    <property type="gene designation" value="MDH2"/>
</dbReference>
<dbReference type="eggNOG" id="KOG1494">
    <property type="taxonomic scope" value="Eukaryota"/>
</dbReference>
<dbReference type="GeneTree" id="ENSGT00390000016686"/>
<dbReference type="HOGENOM" id="CLU_047181_0_1_1"/>
<dbReference type="InParanoid" id="K0J107"/>
<dbReference type="OMA" id="ASCAEYI"/>
<dbReference type="OrthoDB" id="755699at2759"/>
<dbReference type="Proteomes" id="UP000011712">
    <property type="component" value="Chromosome E3"/>
</dbReference>
<dbReference type="Bgee" id="ENSFCAG00000000600">
    <property type="expression patterns" value="Expressed in adult mammalian kidney and 10 other cell types or tissues"/>
</dbReference>
<dbReference type="GO" id="GO:0005737">
    <property type="term" value="C:cytoplasm"/>
    <property type="evidence" value="ECO:0000318"/>
    <property type="project" value="GO_Central"/>
</dbReference>
<dbReference type="GO" id="GO:0016020">
    <property type="term" value="C:membrane"/>
    <property type="evidence" value="ECO:0007669"/>
    <property type="project" value="Ensembl"/>
</dbReference>
<dbReference type="GO" id="GO:0005759">
    <property type="term" value="C:mitochondrial matrix"/>
    <property type="evidence" value="ECO:0000250"/>
    <property type="project" value="UniProtKB"/>
</dbReference>
<dbReference type="GO" id="GO:0005739">
    <property type="term" value="C:mitochondrion"/>
    <property type="evidence" value="ECO:0000318"/>
    <property type="project" value="GO_Central"/>
</dbReference>
<dbReference type="GO" id="GO:0030060">
    <property type="term" value="F:L-malate dehydrogenase (NAD+) activity"/>
    <property type="evidence" value="ECO:0000250"/>
    <property type="project" value="UniProtKB"/>
</dbReference>
<dbReference type="GO" id="GO:0042803">
    <property type="term" value="F:protein homodimerization activity"/>
    <property type="evidence" value="ECO:0000250"/>
    <property type="project" value="UniProtKB"/>
</dbReference>
<dbReference type="GO" id="GO:0009060">
    <property type="term" value="P:aerobic respiration"/>
    <property type="evidence" value="ECO:0000250"/>
    <property type="project" value="UniProtKB"/>
</dbReference>
<dbReference type="GO" id="GO:0006094">
    <property type="term" value="P:gluconeogenesis"/>
    <property type="evidence" value="ECO:0007669"/>
    <property type="project" value="Ensembl"/>
</dbReference>
<dbReference type="GO" id="GO:0006108">
    <property type="term" value="P:malate metabolic process"/>
    <property type="evidence" value="ECO:0007669"/>
    <property type="project" value="Ensembl"/>
</dbReference>
<dbReference type="GO" id="GO:0043490">
    <property type="term" value="P:malate-aspartate shuttle"/>
    <property type="evidence" value="ECO:0007669"/>
    <property type="project" value="Ensembl"/>
</dbReference>
<dbReference type="GO" id="GO:0006099">
    <property type="term" value="P:tricarboxylic acid cycle"/>
    <property type="evidence" value="ECO:0000318"/>
    <property type="project" value="GO_Central"/>
</dbReference>
<dbReference type="CDD" id="cd01337">
    <property type="entry name" value="MDH_glyoxysomal_mitochondrial"/>
    <property type="match status" value="1"/>
</dbReference>
<dbReference type="FunFam" id="3.40.50.720:FF:000013">
    <property type="entry name" value="Malate dehydrogenase"/>
    <property type="match status" value="1"/>
</dbReference>
<dbReference type="FunFam" id="3.90.110.10:FF:000001">
    <property type="entry name" value="Malate dehydrogenase"/>
    <property type="match status" value="1"/>
</dbReference>
<dbReference type="Gene3D" id="3.90.110.10">
    <property type="entry name" value="Lactate dehydrogenase/glycoside hydrolase, family 4, C-terminal"/>
    <property type="match status" value="1"/>
</dbReference>
<dbReference type="Gene3D" id="3.40.50.720">
    <property type="entry name" value="NAD(P)-binding Rossmann-like Domain"/>
    <property type="match status" value="1"/>
</dbReference>
<dbReference type="InterPro" id="IPR001557">
    <property type="entry name" value="L-lactate/malate_DH"/>
</dbReference>
<dbReference type="InterPro" id="IPR022383">
    <property type="entry name" value="Lactate/malate_DH_C"/>
</dbReference>
<dbReference type="InterPro" id="IPR001236">
    <property type="entry name" value="Lactate/malate_DH_N"/>
</dbReference>
<dbReference type="InterPro" id="IPR015955">
    <property type="entry name" value="Lactate_DH/Glyco_Ohase_4_C"/>
</dbReference>
<dbReference type="InterPro" id="IPR001252">
    <property type="entry name" value="Malate_DH_AS"/>
</dbReference>
<dbReference type="InterPro" id="IPR010097">
    <property type="entry name" value="Malate_DH_type1"/>
</dbReference>
<dbReference type="InterPro" id="IPR036291">
    <property type="entry name" value="NAD(P)-bd_dom_sf"/>
</dbReference>
<dbReference type="NCBIfam" id="TIGR01772">
    <property type="entry name" value="MDH_euk_gproteo"/>
    <property type="match status" value="1"/>
</dbReference>
<dbReference type="PANTHER" id="PTHR11540">
    <property type="entry name" value="MALATE AND LACTATE DEHYDROGENASE"/>
    <property type="match status" value="1"/>
</dbReference>
<dbReference type="PANTHER" id="PTHR11540:SF16">
    <property type="entry name" value="MALATE DEHYDROGENASE, MITOCHONDRIAL"/>
    <property type="match status" value="1"/>
</dbReference>
<dbReference type="Pfam" id="PF02866">
    <property type="entry name" value="Ldh_1_C"/>
    <property type="match status" value="1"/>
</dbReference>
<dbReference type="Pfam" id="PF00056">
    <property type="entry name" value="Ldh_1_N"/>
    <property type="match status" value="1"/>
</dbReference>
<dbReference type="PIRSF" id="PIRSF000102">
    <property type="entry name" value="Lac_mal_DH"/>
    <property type="match status" value="1"/>
</dbReference>
<dbReference type="SUPFAM" id="SSF56327">
    <property type="entry name" value="LDH C-terminal domain-like"/>
    <property type="match status" value="1"/>
</dbReference>
<dbReference type="SUPFAM" id="SSF51735">
    <property type="entry name" value="NAD(P)-binding Rossmann-fold domains"/>
    <property type="match status" value="1"/>
</dbReference>
<dbReference type="PROSITE" id="PS00068">
    <property type="entry name" value="MDH"/>
    <property type="match status" value="1"/>
</dbReference>
<protein>
    <recommendedName>
        <fullName evidence="9 11">Malate dehydrogenase, mitochondrial</fullName>
        <ecNumber evidence="9">1.1.1.37</ecNumber>
    </recommendedName>
</protein>
<reference evidence="14" key="1">
    <citation type="journal article" date="2014" name="Genet. Mol. Res.">
        <title>Molecular analysis of cytosolic and mitochondrial malate dehydrogenases isolated from domestic cats (Felis catus).</title>
        <authorList>
            <person name="Sasaki N."/>
            <person name="Nakamura M."/>
            <person name="Soeta S."/>
        </authorList>
    </citation>
    <scope>NUCLEOTIDE SEQUENCE [MRNA]</scope>
    <scope>TISSUE SPECIFICITY</scope>
    <source>
        <tissue evidence="11">Liver</tissue>
    </source>
</reference>
<reference evidence="15" key="2">
    <citation type="journal article" date="2007" name="Genome Res.">
        <title>Initial sequence and comparative analysis of the cat genome.</title>
        <authorList>
            <person name="Pontius J.U."/>
            <person name="Mullikin J.C."/>
            <person name="Smith D.R."/>
            <person name="Lindblad-Toh K."/>
            <person name="Gnerre S."/>
            <person name="Clamp M."/>
            <person name="Chang J."/>
            <person name="Stephens R."/>
            <person name="Neelam B."/>
            <person name="Volfovsky N."/>
            <person name="Schaffer A.A."/>
            <person name="Agarwala R."/>
            <person name="Narfstrom K."/>
            <person name="Murphy W.J."/>
            <person name="Giger U."/>
            <person name="Roca A.L."/>
            <person name="Antunes A."/>
            <person name="Menotti-Raymond M."/>
            <person name="Yuhki N."/>
            <person name="Pecon-Slattery J."/>
            <person name="Johnson W.E."/>
            <person name="Bourque G."/>
            <person name="Tesler G."/>
            <person name="O'Brien S.J."/>
        </authorList>
    </citation>
    <scope>NUCLEOTIDE SEQUENCE [LARGE SCALE GENOMIC DNA]</scope>
    <source>
        <strain evidence="15">Abyssinian</strain>
    </source>
</reference>
<reference evidence="13" key="3">
    <citation type="journal article" date="2006" name="Mol. Biol. Evol.">
        <title>Housekeeping genes for phylogenetic analysis of eutherian relationships.</title>
        <authorList>
            <person name="Kullberg M."/>
            <person name="Nilsson M.A."/>
            <person name="Arnason U."/>
            <person name="Harley E.H."/>
            <person name="Janke A."/>
        </authorList>
    </citation>
    <scope>NUCLEOTIDE SEQUENCE [MRNA] OF 22-314</scope>
</reference>
<proteinExistence type="evidence at transcript level"/>
<comment type="catalytic activity">
    <reaction evidence="9">
        <text>(S)-malate + NAD(+) = oxaloacetate + NADH + H(+)</text>
        <dbReference type="Rhea" id="RHEA:21432"/>
        <dbReference type="ChEBI" id="CHEBI:15378"/>
        <dbReference type="ChEBI" id="CHEBI:15589"/>
        <dbReference type="ChEBI" id="CHEBI:16452"/>
        <dbReference type="ChEBI" id="CHEBI:57540"/>
        <dbReference type="ChEBI" id="CHEBI:57945"/>
        <dbReference type="EC" id="1.1.1.37"/>
    </reaction>
</comment>
<comment type="activity regulation">
    <text evidence="4">Enzyme activity is enhanced by acetylation.</text>
</comment>
<comment type="subunit">
    <text evidence="1">Homodimer.</text>
</comment>
<comment type="subcellular location">
    <subcellularLocation>
        <location evidence="2">Mitochondrion matrix</location>
    </subcellularLocation>
</comment>
<comment type="tissue specificity">
    <text evidence="10">Ubiquitously expressed. Highly expressed in skeletal muscle and heart. Also expressed in liver, ileum, colon, kidney and adipose tissue, and at very low levels in lung, pancreas, stomach and spleen.</text>
</comment>
<comment type="PTM">
    <text evidence="4">Acetylation is enhanced after treatment either with trichostin A (TSA) or with nicotinamide (NAM) with the appearance of tri- and tetraacetylations. Glucose also increases acetylation.</text>
</comment>
<comment type="similarity">
    <text evidence="8 12">Belongs to the LDH/MDH superfamily. MDH type 1 family.</text>
</comment>
<organism>
    <name type="scientific">Felis catus</name>
    <name type="common">Cat</name>
    <name type="synonym">Felis silvestris catus</name>
    <dbReference type="NCBI Taxonomy" id="9685"/>
    <lineage>
        <taxon>Eukaryota</taxon>
        <taxon>Metazoa</taxon>
        <taxon>Chordata</taxon>
        <taxon>Craniata</taxon>
        <taxon>Vertebrata</taxon>
        <taxon>Euteleostomi</taxon>
        <taxon>Mammalia</taxon>
        <taxon>Eutheria</taxon>
        <taxon>Laurasiatheria</taxon>
        <taxon>Carnivora</taxon>
        <taxon>Feliformia</taxon>
        <taxon>Felidae</taxon>
        <taxon>Felinae</taxon>
        <taxon>Felis</taxon>
    </lineage>
</organism>
<sequence>MLSALARPAGAALRRSFSTSAQNNAKVAVLGASGGIGQPLSLLLKNSPLVSRLTLYDIAHTPGVAADLSHIETRAAVKGYLGPEQLPDCLKGCDVVVIPAGVPRKPGMTRDDLFNTNASIVATLTAACAQHCPEAMICIISNPVNSTIPITAEVFKKHGVYNPNKIFGVTTLDIVRANTFIAELKGLDPARVNVPVIGGHAGKTIIPLISQCTPKVDLPQDQLTAVTGRIQEAGTEVVKAKAGAGSATLSMAYAGARFVFSLVDAINGKEGVVECSFVKSQETDCPYFSTPLLLGKKGIEKNLGIGKISPFEEKMIAEALPELKASIKKGEEFVKNMK</sequence>
<evidence type="ECO:0000250" key="1">
    <source>
        <dbReference type="UniProtKB" id="P00346"/>
    </source>
</evidence>
<evidence type="ECO:0000250" key="2">
    <source>
        <dbReference type="UniProtKB" id="P04636"/>
    </source>
</evidence>
<evidence type="ECO:0000250" key="3">
    <source>
        <dbReference type="UniProtKB" id="P08249"/>
    </source>
</evidence>
<evidence type="ECO:0000250" key="4">
    <source>
        <dbReference type="UniProtKB" id="P40926"/>
    </source>
</evidence>
<evidence type="ECO:0000250" key="5">
    <source>
        <dbReference type="UniProtKB" id="Q32LG3"/>
    </source>
</evidence>
<evidence type="ECO:0000255" key="6">
    <source>
        <dbReference type="PIRSR" id="PIRSR000102-1"/>
    </source>
</evidence>
<evidence type="ECO:0000255" key="7">
    <source>
        <dbReference type="PROSITE-ProRule" id="PRU10004"/>
    </source>
</evidence>
<evidence type="ECO:0000255" key="8">
    <source>
        <dbReference type="RuleBase" id="RU003369"/>
    </source>
</evidence>
<evidence type="ECO:0000255" key="9">
    <source>
        <dbReference type="RuleBase" id="RU003405"/>
    </source>
</evidence>
<evidence type="ECO:0000269" key="10">
    <source>
    </source>
</evidence>
<evidence type="ECO:0000303" key="11">
    <source>
    </source>
</evidence>
<evidence type="ECO:0000305" key="12"/>
<evidence type="ECO:0000312" key="13">
    <source>
        <dbReference type="EMBL" id="ABD77294.1"/>
    </source>
</evidence>
<evidence type="ECO:0000312" key="14">
    <source>
        <dbReference type="EMBL" id="BAM48565.1"/>
    </source>
</evidence>
<evidence type="ECO:0000312" key="15">
    <source>
        <dbReference type="Proteomes" id="UP000011712"/>
    </source>
</evidence>
<gene>
    <name evidence="11" type="primary">MDH2</name>
</gene>
<feature type="transit peptide" description="Mitochondrion" evidence="1">
    <location>
        <begin position="1"/>
        <end position="24"/>
    </location>
</feature>
<feature type="chain" id="PRO_0000438644" description="Malate dehydrogenase, mitochondrial">
    <location>
        <begin position="25"/>
        <end position="338"/>
    </location>
</feature>
<feature type="active site" description="Proton relay" evidence="7">
    <location>
        <position position="173"/>
    </location>
</feature>
<feature type="active site" description="Proton acceptor" evidence="6">
    <location>
        <position position="200"/>
    </location>
</feature>
<feature type="binding site" evidence="4">
    <location>
        <begin position="31"/>
        <end position="37"/>
    </location>
    <ligand>
        <name>NAD(+)</name>
        <dbReference type="ChEBI" id="CHEBI:57540"/>
    </ligand>
</feature>
<feature type="binding site" evidence="4">
    <location>
        <position position="57"/>
    </location>
    <ligand>
        <name>NAD(+)</name>
        <dbReference type="ChEBI" id="CHEBI:57540"/>
    </ligand>
</feature>
<feature type="binding site" evidence="7">
    <location>
        <position position="104"/>
    </location>
    <ligand>
        <name>substrate</name>
    </ligand>
</feature>
<feature type="binding site" evidence="7">
    <location>
        <position position="110"/>
    </location>
    <ligand>
        <name>substrate</name>
    </ligand>
</feature>
<feature type="binding site" evidence="4">
    <location>
        <position position="117"/>
    </location>
    <ligand>
        <name>NAD(+)</name>
        <dbReference type="ChEBI" id="CHEBI:57540"/>
    </ligand>
</feature>
<feature type="binding site" evidence="4">
    <location>
        <begin position="140"/>
        <end position="142"/>
    </location>
    <ligand>
        <name>NAD(+)</name>
        <dbReference type="ChEBI" id="CHEBI:57540"/>
    </ligand>
</feature>
<feature type="binding site" evidence="7">
    <location>
        <position position="142"/>
    </location>
    <ligand>
        <name>substrate</name>
    </ligand>
</feature>
<feature type="binding site" evidence="7">
    <location>
        <position position="176"/>
    </location>
    <ligand>
        <name>substrate</name>
    </ligand>
</feature>
<feature type="binding site" evidence="4">
    <location>
        <position position="251"/>
    </location>
    <ligand>
        <name>NAD(+)</name>
        <dbReference type="ChEBI" id="CHEBI:57540"/>
    </ligand>
</feature>
<feature type="modified residue" description="N6-acetyllysine; alternate" evidence="3">
    <location>
        <position position="78"/>
    </location>
</feature>
<feature type="modified residue" description="N6-succinyllysine; alternate" evidence="3">
    <location>
        <position position="78"/>
    </location>
</feature>
<feature type="modified residue" description="N6-acetyllysine; alternate" evidence="3">
    <location>
        <position position="91"/>
    </location>
</feature>
<feature type="modified residue" description="N6-succinyllysine; alternate" evidence="3">
    <location>
        <position position="91"/>
    </location>
</feature>
<feature type="modified residue" description="N6-acetyllysine" evidence="4">
    <location>
        <position position="165"/>
    </location>
</feature>
<feature type="modified residue" description="N6-acetyllysine; alternate" evidence="5">
    <location>
        <position position="185"/>
    </location>
</feature>
<feature type="modified residue" description="N6-succinyllysine; alternate" evidence="3">
    <location>
        <position position="185"/>
    </location>
</feature>
<feature type="modified residue" description="N6-succinyllysine" evidence="3">
    <location>
        <position position="203"/>
    </location>
</feature>
<feature type="modified residue" description="N6-acetyllysine; alternate" evidence="3">
    <location>
        <position position="215"/>
    </location>
</feature>
<feature type="modified residue" description="N6-succinyllysine; alternate" evidence="3">
    <location>
        <position position="215"/>
    </location>
</feature>
<feature type="modified residue" description="N6-acetyllysine; alternate" evidence="3">
    <location>
        <position position="239"/>
    </location>
</feature>
<feature type="modified residue" description="N6-malonyllysine; alternate" evidence="5">
    <location>
        <position position="239"/>
    </location>
</feature>
<feature type="modified residue" description="N6-succinyllysine; alternate" evidence="5">
    <location>
        <position position="239"/>
    </location>
</feature>
<feature type="modified residue" description="Phosphoserine" evidence="4">
    <location>
        <position position="246"/>
    </location>
</feature>
<feature type="modified residue" description="N6-succinyllysine" evidence="3">
    <location>
        <position position="269"/>
    </location>
</feature>
<feature type="modified residue" description="N6-acetyllysine; alternate" evidence="3">
    <location>
        <position position="296"/>
    </location>
</feature>
<feature type="modified residue" description="N6-succinyllysine; alternate" evidence="3">
    <location>
        <position position="296"/>
    </location>
</feature>
<feature type="modified residue" description="N6-acetyllysine; alternate" evidence="4">
    <location>
        <position position="301"/>
    </location>
</feature>
<feature type="modified residue" description="N6-succinyllysine; alternate" evidence="5">
    <location>
        <position position="301"/>
    </location>
</feature>
<feature type="modified residue" description="N6-acetyllysine; alternate" evidence="5">
    <location>
        <position position="307"/>
    </location>
</feature>
<feature type="modified residue" description="N6-malonyllysine; alternate" evidence="4">
    <location>
        <position position="307"/>
    </location>
</feature>
<feature type="modified residue" description="N6-succinyllysine; alternate" evidence="3">
    <location>
        <position position="307"/>
    </location>
</feature>
<feature type="modified residue" description="N6-acetyllysine; alternate" evidence="5">
    <location>
        <position position="314"/>
    </location>
</feature>
<feature type="modified residue" description="N6-succinyllysine; alternate" evidence="3">
    <location>
        <position position="314"/>
    </location>
</feature>
<feature type="modified residue" description="N6-acetyllysine; alternate" evidence="3">
    <location>
        <position position="324"/>
    </location>
</feature>
<feature type="modified residue" description="N6-succinyllysine; alternate" evidence="3">
    <location>
        <position position="324"/>
    </location>
</feature>
<feature type="modified residue" description="Phosphoserine" evidence="4">
    <location>
        <position position="326"/>
    </location>
</feature>
<feature type="modified residue" description="N6-acetyllysine; alternate" evidence="5">
    <location>
        <position position="328"/>
    </location>
</feature>
<feature type="modified residue" description="N6-succinyllysine; alternate" evidence="5">
    <location>
        <position position="328"/>
    </location>
</feature>
<feature type="modified residue" description="N6-acetyllysine; alternate" evidence="4">
    <location>
        <position position="329"/>
    </location>
</feature>
<feature type="modified residue" description="N6-malonyllysine; alternate" evidence="5">
    <location>
        <position position="329"/>
    </location>
</feature>
<feature type="modified residue" description="N6-acetyllysine; alternate" evidence="4">
    <location>
        <position position="335"/>
    </location>
</feature>
<feature type="modified residue" description="N6-succinyllysine; alternate" evidence="3">
    <location>
        <position position="335"/>
    </location>
</feature>
<feature type="glycosylation site" description="O-linked (GalNAc...) serine" evidence="2">
    <location>
        <position position="33"/>
    </location>
</feature>
<feature type="sequence conflict" description="In Ref. 3; ABD77294." evidence="12" ref="3">
    <original>K</original>
    <variation>N</variation>
    <location>
        <position position="26"/>
    </location>
</feature>
<feature type="sequence conflict" description="In Ref. 3; ABD77294." evidence="12" ref="3">
    <original>P</original>
    <variation>S</variation>
    <location>
        <position position="310"/>
    </location>
</feature>
<name>MDHM_FELCA</name>
<keyword id="KW-0007">Acetylation</keyword>
<keyword id="KW-0325">Glycoprotein</keyword>
<keyword id="KW-0496">Mitochondrion</keyword>
<keyword id="KW-0520">NAD</keyword>
<keyword id="KW-0560">Oxidoreductase</keyword>
<keyword id="KW-0597">Phosphoprotein</keyword>
<keyword id="KW-1185">Reference proteome</keyword>
<keyword id="KW-0809">Transit peptide</keyword>
<keyword id="KW-0816">Tricarboxylic acid cycle</keyword>
<accession>K0J107</accession>
<accession>Q0QF33</accession>